<feature type="chain" id="PRO_1000144781" description="Hydroxyacylglutathione hydrolase">
    <location>
        <begin position="1"/>
        <end position="258"/>
    </location>
</feature>
<feature type="binding site" evidence="1">
    <location>
        <position position="56"/>
    </location>
    <ligand>
        <name>Zn(2+)</name>
        <dbReference type="ChEBI" id="CHEBI:29105"/>
        <label>1</label>
    </ligand>
</feature>
<feature type="binding site" evidence="1">
    <location>
        <position position="58"/>
    </location>
    <ligand>
        <name>Zn(2+)</name>
        <dbReference type="ChEBI" id="CHEBI:29105"/>
        <label>1</label>
    </ligand>
</feature>
<feature type="binding site" evidence="1">
    <location>
        <position position="60"/>
    </location>
    <ligand>
        <name>Zn(2+)</name>
        <dbReference type="ChEBI" id="CHEBI:29105"/>
        <label>2</label>
    </ligand>
</feature>
<feature type="binding site" evidence="1">
    <location>
        <position position="61"/>
    </location>
    <ligand>
        <name>Zn(2+)</name>
        <dbReference type="ChEBI" id="CHEBI:29105"/>
        <label>2</label>
    </ligand>
</feature>
<feature type="binding site" evidence="1">
    <location>
        <position position="112"/>
    </location>
    <ligand>
        <name>Zn(2+)</name>
        <dbReference type="ChEBI" id="CHEBI:29105"/>
        <label>1</label>
    </ligand>
</feature>
<feature type="binding site" evidence="1">
    <location>
        <position position="132"/>
    </location>
    <ligand>
        <name>Zn(2+)</name>
        <dbReference type="ChEBI" id="CHEBI:29105"/>
        <label>1</label>
    </ligand>
</feature>
<feature type="binding site" evidence="1">
    <location>
        <position position="132"/>
    </location>
    <ligand>
        <name>Zn(2+)</name>
        <dbReference type="ChEBI" id="CHEBI:29105"/>
        <label>2</label>
    </ligand>
</feature>
<feature type="binding site" evidence="1">
    <location>
        <position position="170"/>
    </location>
    <ligand>
        <name>Zn(2+)</name>
        <dbReference type="ChEBI" id="CHEBI:29105"/>
        <label>2</label>
    </ligand>
</feature>
<feature type="strand" evidence="2">
    <location>
        <begin position="2"/>
        <end position="9"/>
    </location>
</feature>
<feature type="turn" evidence="2">
    <location>
        <begin position="10"/>
        <end position="12"/>
    </location>
</feature>
<feature type="strand" evidence="2">
    <location>
        <begin position="13"/>
        <end position="20"/>
    </location>
</feature>
<feature type="turn" evidence="2">
    <location>
        <begin position="21"/>
        <end position="24"/>
    </location>
</feature>
<feature type="strand" evidence="2">
    <location>
        <begin position="25"/>
        <end position="29"/>
    </location>
</feature>
<feature type="helix" evidence="2">
    <location>
        <begin position="34"/>
        <end position="43"/>
    </location>
</feature>
<feature type="strand" evidence="2">
    <location>
        <begin position="48"/>
        <end position="53"/>
    </location>
</feature>
<feature type="helix" evidence="2">
    <location>
        <begin position="59"/>
        <end position="62"/>
    </location>
</feature>
<feature type="helix" evidence="2">
    <location>
        <begin position="65"/>
        <end position="72"/>
    </location>
</feature>
<feature type="strand" evidence="2">
    <location>
        <begin position="75"/>
        <end position="79"/>
    </location>
</feature>
<feature type="strand" evidence="2">
    <location>
        <begin position="88"/>
        <end position="91"/>
    </location>
</feature>
<feature type="strand" evidence="2">
    <location>
        <begin position="96"/>
        <end position="99"/>
    </location>
</feature>
<feature type="strand" evidence="2">
    <location>
        <begin position="102"/>
        <end position="108"/>
    </location>
</feature>
<feature type="strand" evidence="2">
    <location>
        <begin position="111"/>
        <end position="113"/>
    </location>
</feature>
<feature type="strand" evidence="2">
    <location>
        <begin position="117"/>
        <end position="121"/>
    </location>
</feature>
<feature type="strand" evidence="2">
    <location>
        <begin position="123"/>
        <end position="125"/>
    </location>
</feature>
<feature type="strand" evidence="2">
    <location>
        <begin position="127"/>
        <end position="131"/>
    </location>
</feature>
<feature type="strand" evidence="2">
    <location>
        <begin position="133"/>
        <end position="135"/>
    </location>
</feature>
<feature type="strand" evidence="2">
    <location>
        <begin position="143"/>
        <end position="145"/>
    </location>
</feature>
<feature type="helix" evidence="2">
    <location>
        <begin position="147"/>
        <end position="158"/>
    </location>
</feature>
<feature type="strand" evidence="2">
    <location>
        <begin position="165"/>
        <end position="170"/>
    </location>
</feature>
<feature type="helix" evidence="2">
    <location>
        <begin position="173"/>
        <end position="183"/>
    </location>
</feature>
<feature type="helix" evidence="2">
    <location>
        <begin position="188"/>
        <end position="202"/>
    </location>
</feature>
<feature type="strand" evidence="2">
    <location>
        <begin position="209"/>
        <end position="211"/>
    </location>
</feature>
<feature type="helix" evidence="2">
    <location>
        <begin position="212"/>
        <end position="218"/>
    </location>
</feature>
<feature type="helix" evidence="2">
    <location>
        <begin position="220"/>
        <end position="222"/>
    </location>
</feature>
<feature type="helix" evidence="2">
    <location>
        <begin position="227"/>
        <end position="237"/>
    </location>
</feature>
<feature type="helix" evidence="2">
    <location>
        <begin position="244"/>
        <end position="256"/>
    </location>
</feature>
<reference key="1">
    <citation type="journal article" date="2000" name="Nature">
        <title>Complete genome sequence of Pseudomonas aeruginosa PAO1, an opportunistic pathogen.</title>
        <authorList>
            <person name="Stover C.K."/>
            <person name="Pham X.-Q.T."/>
            <person name="Erwin A.L."/>
            <person name="Mizoguchi S.D."/>
            <person name="Warrener P."/>
            <person name="Hickey M.J."/>
            <person name="Brinkman F.S.L."/>
            <person name="Hufnagle W.O."/>
            <person name="Kowalik D.J."/>
            <person name="Lagrou M."/>
            <person name="Garber R.L."/>
            <person name="Goltry L."/>
            <person name="Tolentino E."/>
            <person name="Westbrock-Wadman S."/>
            <person name="Yuan Y."/>
            <person name="Brody L.L."/>
            <person name="Coulter S.N."/>
            <person name="Folger K.R."/>
            <person name="Kas A."/>
            <person name="Larbig K."/>
            <person name="Lim R.M."/>
            <person name="Smith K.A."/>
            <person name="Spencer D.H."/>
            <person name="Wong G.K.-S."/>
            <person name="Wu Z."/>
            <person name="Paulsen I.T."/>
            <person name="Reizer J."/>
            <person name="Saier M.H. Jr."/>
            <person name="Hancock R.E.W."/>
            <person name="Lory S."/>
            <person name="Olson M.V."/>
        </authorList>
    </citation>
    <scope>NUCLEOTIDE SEQUENCE [LARGE SCALE GENOMIC DNA]</scope>
    <source>
        <strain>ATCC 15692 / DSM 22644 / CIP 104116 / JCM 14847 / LMG 12228 / 1C / PRS 101 / PAO1</strain>
    </source>
</reference>
<sequence length="258" mass="28866">MIQIDALPAFNDNYIWLLQDATSRRCAVVDPGDAKPVEAWLAAHPDWRLSDILVTHHHHDHVGGVAALKELTGARVLGPANEKIPARDLALEDGERVEVLGLVFEIFHVPGHTLGHIAYYHPAETPLLFCGDTLFAAGCGRLFEGTPAQMHHSLARLAALPANTRVYCTHEYTLSNLRFALAVEPDNAALRERFEEATRLRERDRITLPSEISLELSTNPFLRVSENSVKKKADQRSGQQNRTPEEVFAVLRAWKDQF</sequence>
<dbReference type="EC" id="3.1.2.6" evidence="1"/>
<dbReference type="EMBL" id="AE004091">
    <property type="protein sequence ID" value="AAG05202.1"/>
    <property type="molecule type" value="Genomic_DNA"/>
</dbReference>
<dbReference type="PIR" id="G83417">
    <property type="entry name" value="G83417"/>
</dbReference>
<dbReference type="RefSeq" id="NP_250504.1">
    <property type="nucleotide sequence ID" value="NC_002516.2"/>
</dbReference>
<dbReference type="RefSeq" id="WP_003087949.1">
    <property type="nucleotide sequence ID" value="NZ_QZGE01000003.1"/>
</dbReference>
<dbReference type="PDB" id="8EWO">
    <property type="method" value="X-ray"/>
    <property type="resolution" value="2.47 A"/>
    <property type="chains" value="A/B/C=1-258"/>
</dbReference>
<dbReference type="PDBsum" id="8EWO"/>
<dbReference type="SMR" id="Q9I2T1"/>
<dbReference type="FunCoup" id="Q9I2T1">
    <property type="interactions" value="517"/>
</dbReference>
<dbReference type="STRING" id="208964.PA1813"/>
<dbReference type="PaxDb" id="208964-PA1813"/>
<dbReference type="GeneID" id="878377"/>
<dbReference type="KEGG" id="pae:PA1813"/>
<dbReference type="PATRIC" id="fig|208964.12.peg.1883"/>
<dbReference type="PseudoCAP" id="PA1813"/>
<dbReference type="HOGENOM" id="CLU_030571_4_1_6"/>
<dbReference type="InParanoid" id="Q9I2T1"/>
<dbReference type="OrthoDB" id="9802248at2"/>
<dbReference type="PhylomeDB" id="Q9I2T1"/>
<dbReference type="BioCyc" id="PAER208964:G1FZ6-1851-MONOMER"/>
<dbReference type="UniPathway" id="UPA00619">
    <property type="reaction ID" value="UER00676"/>
</dbReference>
<dbReference type="Proteomes" id="UP000002438">
    <property type="component" value="Chromosome"/>
</dbReference>
<dbReference type="GO" id="GO:0004416">
    <property type="term" value="F:hydroxyacylglutathione hydrolase activity"/>
    <property type="evidence" value="ECO:0007669"/>
    <property type="project" value="UniProtKB-UniRule"/>
</dbReference>
<dbReference type="GO" id="GO:0046872">
    <property type="term" value="F:metal ion binding"/>
    <property type="evidence" value="ECO:0007669"/>
    <property type="project" value="UniProtKB-KW"/>
</dbReference>
<dbReference type="GO" id="GO:0019243">
    <property type="term" value="P:methylglyoxal catabolic process to D-lactate via S-lactoyl-glutathione"/>
    <property type="evidence" value="ECO:0007669"/>
    <property type="project" value="InterPro"/>
</dbReference>
<dbReference type="CDD" id="cd07723">
    <property type="entry name" value="hydroxyacylglutathione_hydrolase_MBL-fold"/>
    <property type="match status" value="1"/>
</dbReference>
<dbReference type="Gene3D" id="3.60.15.10">
    <property type="entry name" value="Ribonuclease Z/Hydroxyacylglutathione hydrolase-like"/>
    <property type="match status" value="1"/>
</dbReference>
<dbReference type="HAMAP" id="MF_01374">
    <property type="entry name" value="Glyoxalase_2"/>
    <property type="match status" value="1"/>
</dbReference>
<dbReference type="InterPro" id="IPR035680">
    <property type="entry name" value="Clx_II_MBL"/>
</dbReference>
<dbReference type="InterPro" id="IPR050110">
    <property type="entry name" value="Glyoxalase_II_hydrolase"/>
</dbReference>
<dbReference type="InterPro" id="IPR032282">
    <property type="entry name" value="HAGH_C"/>
</dbReference>
<dbReference type="InterPro" id="IPR017782">
    <property type="entry name" value="Hydroxyacylglutathione_Hdrlase"/>
</dbReference>
<dbReference type="InterPro" id="IPR001279">
    <property type="entry name" value="Metallo-B-lactamas"/>
</dbReference>
<dbReference type="InterPro" id="IPR036866">
    <property type="entry name" value="RibonucZ/Hydroxyglut_hydro"/>
</dbReference>
<dbReference type="NCBIfam" id="TIGR03413">
    <property type="entry name" value="GSH_gloB"/>
    <property type="match status" value="1"/>
</dbReference>
<dbReference type="PANTHER" id="PTHR43705">
    <property type="entry name" value="HYDROXYACYLGLUTATHIONE HYDROLASE"/>
    <property type="match status" value="1"/>
</dbReference>
<dbReference type="PANTHER" id="PTHR43705:SF1">
    <property type="entry name" value="HYDROXYACYLGLUTATHIONE HYDROLASE GLOB"/>
    <property type="match status" value="1"/>
</dbReference>
<dbReference type="Pfam" id="PF16123">
    <property type="entry name" value="HAGH_C"/>
    <property type="match status" value="1"/>
</dbReference>
<dbReference type="Pfam" id="PF00753">
    <property type="entry name" value="Lactamase_B"/>
    <property type="match status" value="1"/>
</dbReference>
<dbReference type="PIRSF" id="PIRSF005457">
    <property type="entry name" value="Glx"/>
    <property type="match status" value="1"/>
</dbReference>
<dbReference type="SMART" id="SM00849">
    <property type="entry name" value="Lactamase_B"/>
    <property type="match status" value="1"/>
</dbReference>
<dbReference type="SUPFAM" id="SSF56281">
    <property type="entry name" value="Metallo-hydrolase/oxidoreductase"/>
    <property type="match status" value="1"/>
</dbReference>
<accession>Q9I2T1</accession>
<proteinExistence type="evidence at protein level"/>
<name>GLO2_PSEAE</name>
<evidence type="ECO:0000255" key="1">
    <source>
        <dbReference type="HAMAP-Rule" id="MF_01374"/>
    </source>
</evidence>
<evidence type="ECO:0007829" key="2">
    <source>
        <dbReference type="PDB" id="8EWO"/>
    </source>
</evidence>
<comment type="function">
    <text evidence="1">Thiolesterase that catalyzes the hydrolysis of S-D-lactoyl-glutathione to form glutathione and D-lactic acid.</text>
</comment>
<comment type="catalytic activity">
    <reaction evidence="1">
        <text>an S-(2-hydroxyacyl)glutathione + H2O = a 2-hydroxy carboxylate + glutathione + H(+)</text>
        <dbReference type="Rhea" id="RHEA:21864"/>
        <dbReference type="ChEBI" id="CHEBI:15377"/>
        <dbReference type="ChEBI" id="CHEBI:15378"/>
        <dbReference type="ChEBI" id="CHEBI:57925"/>
        <dbReference type="ChEBI" id="CHEBI:58896"/>
        <dbReference type="ChEBI" id="CHEBI:71261"/>
        <dbReference type="EC" id="3.1.2.6"/>
    </reaction>
</comment>
<comment type="cofactor">
    <cofactor evidence="1">
        <name>Zn(2+)</name>
        <dbReference type="ChEBI" id="CHEBI:29105"/>
    </cofactor>
    <text evidence="1">Binds 2 Zn(2+) ions per subunit.</text>
</comment>
<comment type="pathway">
    <text evidence="1">Secondary metabolite metabolism; methylglyoxal degradation; (R)-lactate from methylglyoxal: step 2/2.</text>
</comment>
<comment type="subunit">
    <text evidence="1">Monomer.</text>
</comment>
<comment type="similarity">
    <text evidence="1">Belongs to the metallo-beta-lactamase superfamily. Glyoxalase II family.</text>
</comment>
<organism>
    <name type="scientific">Pseudomonas aeruginosa (strain ATCC 15692 / DSM 22644 / CIP 104116 / JCM 14847 / LMG 12228 / 1C / PRS 101 / PAO1)</name>
    <dbReference type="NCBI Taxonomy" id="208964"/>
    <lineage>
        <taxon>Bacteria</taxon>
        <taxon>Pseudomonadati</taxon>
        <taxon>Pseudomonadota</taxon>
        <taxon>Gammaproteobacteria</taxon>
        <taxon>Pseudomonadales</taxon>
        <taxon>Pseudomonadaceae</taxon>
        <taxon>Pseudomonas</taxon>
    </lineage>
</organism>
<gene>
    <name evidence="1" type="primary">gloB</name>
    <name type="ordered locus">PA1813</name>
</gene>
<keyword id="KW-0002">3D-structure</keyword>
<keyword id="KW-0378">Hydrolase</keyword>
<keyword id="KW-0479">Metal-binding</keyword>
<keyword id="KW-1185">Reference proteome</keyword>
<keyword id="KW-0862">Zinc</keyword>
<protein>
    <recommendedName>
        <fullName evidence="1">Hydroxyacylglutathione hydrolase</fullName>
        <ecNumber evidence="1">3.1.2.6</ecNumber>
    </recommendedName>
    <alternativeName>
        <fullName evidence="1">Glyoxalase II</fullName>
        <shortName evidence="1">Glx II</shortName>
    </alternativeName>
</protein>